<proteinExistence type="predicted"/>
<comment type="function">
    <text evidence="3">Transcriptional regulator that may regulate the expression of the satratoxin biosynthesis SC2 cluster, one of the 3 clusters involved in the biosynthesis of satratoxins, trichothecene mycotoxins that are associated with human food poisonings (PubMed:25015739).</text>
</comment>
<comment type="subcellular location">
    <subcellularLocation>
        <location evidence="2">Nucleus</location>
    </subcellularLocation>
</comment>
<comment type="miscellaneous">
    <text evidence="2">Trichothecenes are sesquiterpenoid toxins that act by inhibiting protein biosynthesis.</text>
</comment>
<organism>
    <name type="scientific">Stachybotrys chartarum (strain CBS 109288 / IBT 7711)</name>
    <name type="common">Toxic black mold</name>
    <name type="synonym">Stilbospora chartarum</name>
    <dbReference type="NCBI Taxonomy" id="1280523"/>
    <lineage>
        <taxon>Eukaryota</taxon>
        <taxon>Fungi</taxon>
        <taxon>Dikarya</taxon>
        <taxon>Ascomycota</taxon>
        <taxon>Pezizomycotina</taxon>
        <taxon>Sordariomycetes</taxon>
        <taxon>Hypocreomycetidae</taxon>
        <taxon>Hypocreales</taxon>
        <taxon>Stachybotryaceae</taxon>
        <taxon>Stachybotrys</taxon>
    </lineage>
</organism>
<accession>A0A084API5</accession>
<reference key="1">
    <citation type="journal article" date="2014" name="BMC Genomics">
        <title>Comparative genome sequencing reveals chemotype-specific gene clusters in the toxigenic black mold Stachybotrys.</title>
        <authorList>
            <person name="Semeiks J."/>
            <person name="Borek D."/>
            <person name="Otwinowski Z."/>
            <person name="Grishin N.V."/>
        </authorList>
    </citation>
    <scope>NUCLEOTIDE SEQUENCE [LARGE SCALE GENOMIC DNA]</scope>
    <scope>IDENTIFICATION</scope>
    <scope>FUNCTION</scope>
    <source>
        <strain>CBS 109288 / IBT 7711</strain>
    </source>
</reference>
<name>SAT15_STACB</name>
<dbReference type="EMBL" id="KL648628">
    <property type="protein sequence ID" value="KEY67214.1"/>
    <property type="molecule type" value="Genomic_DNA"/>
</dbReference>
<dbReference type="HOGENOM" id="CLU_1714492_0_0_1"/>
<dbReference type="OrthoDB" id="291232at5125"/>
<dbReference type="Proteomes" id="UP000028045">
    <property type="component" value="Unassembled WGS sequence"/>
</dbReference>
<dbReference type="GO" id="GO:0005634">
    <property type="term" value="C:nucleus"/>
    <property type="evidence" value="ECO:0007669"/>
    <property type="project" value="UniProtKB-SubCell"/>
</dbReference>
<dbReference type="Gene3D" id="3.30.559.10">
    <property type="entry name" value="Chloramphenicol acetyltransferase-like domain"/>
    <property type="match status" value="1"/>
</dbReference>
<dbReference type="InterPro" id="IPR023213">
    <property type="entry name" value="CAT-like_dom_sf"/>
</dbReference>
<gene>
    <name evidence="1" type="primary">SAT15</name>
    <name type="ORF">S7711_11460</name>
</gene>
<feature type="chain" id="PRO_0000442395" description="Satratoxin biosynthesis SC2 cluster transcription factor SAT15">
    <location>
        <begin position="1"/>
        <end position="153"/>
    </location>
</feature>
<protein>
    <recommendedName>
        <fullName evidence="1">Satratoxin biosynthesis SC2 cluster transcription factor SAT15</fullName>
    </recommendedName>
    <alternativeName>
        <fullName evidence="1">Satratoxin biosynthesis SC2 cluster protein 15</fullName>
    </alternativeName>
</protein>
<sequence>MTTPPGWKVSGQNEISRPFDILEAWFHRIVGGGNLTRERDSFGSNYVVKLGFPGSVADPIPYLRRAWLVTRYLHPQLGATYSSKSLDDLRYIIRPLDEQIWLQTTFFVEQGPSATYSSAEDAVSKYLSKSTTTAHWIPATSEFMISPTASSPL</sequence>
<keyword id="KW-0539">Nucleus</keyword>
<keyword id="KW-0804">Transcription</keyword>
<keyword id="KW-0805">Transcription regulation</keyword>
<evidence type="ECO:0000303" key="1">
    <source>
    </source>
</evidence>
<evidence type="ECO:0000305" key="2"/>
<evidence type="ECO:0000305" key="3">
    <source>
    </source>
</evidence>